<proteinExistence type="inferred from homology"/>
<gene>
    <name type="ordered locus">VV2869</name>
</gene>
<reference key="1">
    <citation type="journal article" date="2003" name="Genome Res.">
        <title>Comparative genome analysis of Vibrio vulnificus, a marine pathogen.</title>
        <authorList>
            <person name="Chen C.-Y."/>
            <person name="Wu K.-M."/>
            <person name="Chang Y.-C."/>
            <person name="Chang C.-H."/>
            <person name="Tsai H.-C."/>
            <person name="Liao T.-L."/>
            <person name="Liu Y.-M."/>
            <person name="Chen H.-J."/>
            <person name="Shen A.B.-T."/>
            <person name="Li J.-C."/>
            <person name="Su T.-L."/>
            <person name="Shao C.-P."/>
            <person name="Lee C.-T."/>
            <person name="Hor L.-I."/>
            <person name="Tsai S.-F."/>
        </authorList>
    </citation>
    <scope>NUCLEOTIDE SEQUENCE [LARGE SCALE GENOMIC DNA]</scope>
    <source>
        <strain>YJ016</strain>
    </source>
</reference>
<organism>
    <name type="scientific">Vibrio vulnificus (strain YJ016)</name>
    <dbReference type="NCBI Taxonomy" id="196600"/>
    <lineage>
        <taxon>Bacteria</taxon>
        <taxon>Pseudomonadati</taxon>
        <taxon>Pseudomonadota</taxon>
        <taxon>Gammaproteobacteria</taxon>
        <taxon>Vibrionales</taxon>
        <taxon>Vibrionaceae</taxon>
        <taxon>Vibrio</taxon>
    </lineage>
</organism>
<accession>Q7MHK0</accession>
<protein>
    <recommendedName>
        <fullName evidence="1">UPF0301 protein VV2869</fullName>
    </recommendedName>
</protein>
<dbReference type="EMBL" id="BA000037">
    <property type="protein sequence ID" value="BAC95633.1"/>
    <property type="status" value="ALT_INIT"/>
    <property type="molecule type" value="Genomic_DNA"/>
</dbReference>
<dbReference type="RefSeq" id="WP_011079465.1">
    <property type="nucleotide sequence ID" value="NC_005139.1"/>
</dbReference>
<dbReference type="SMR" id="Q7MHK0"/>
<dbReference type="STRING" id="672.VV93_v1c25760"/>
<dbReference type="KEGG" id="vvy:VV2869"/>
<dbReference type="PATRIC" id="fig|196600.6.peg.2856"/>
<dbReference type="eggNOG" id="COG1678">
    <property type="taxonomic scope" value="Bacteria"/>
</dbReference>
<dbReference type="HOGENOM" id="CLU_057596_1_0_6"/>
<dbReference type="Proteomes" id="UP000002675">
    <property type="component" value="Chromosome I"/>
</dbReference>
<dbReference type="GO" id="GO:0005829">
    <property type="term" value="C:cytosol"/>
    <property type="evidence" value="ECO:0007669"/>
    <property type="project" value="TreeGrafter"/>
</dbReference>
<dbReference type="Gene3D" id="3.40.1740.10">
    <property type="entry name" value="VC0467-like"/>
    <property type="match status" value="1"/>
</dbReference>
<dbReference type="Gene3D" id="3.30.70.1300">
    <property type="entry name" value="VC0467-like domains"/>
    <property type="match status" value="1"/>
</dbReference>
<dbReference type="HAMAP" id="MF_00758">
    <property type="entry name" value="UPF0301"/>
    <property type="match status" value="1"/>
</dbReference>
<dbReference type="InterPro" id="IPR003774">
    <property type="entry name" value="AlgH-like"/>
</dbReference>
<dbReference type="NCBIfam" id="NF001266">
    <property type="entry name" value="PRK00228.1-1"/>
    <property type="match status" value="1"/>
</dbReference>
<dbReference type="PANTHER" id="PTHR30327">
    <property type="entry name" value="UNCHARACTERIZED PROTEIN YQGE"/>
    <property type="match status" value="1"/>
</dbReference>
<dbReference type="PANTHER" id="PTHR30327:SF1">
    <property type="entry name" value="UPF0301 PROTEIN YQGE"/>
    <property type="match status" value="1"/>
</dbReference>
<dbReference type="Pfam" id="PF02622">
    <property type="entry name" value="DUF179"/>
    <property type="match status" value="1"/>
</dbReference>
<dbReference type="SUPFAM" id="SSF143456">
    <property type="entry name" value="VC0467-like"/>
    <property type="match status" value="1"/>
</dbReference>
<evidence type="ECO:0000255" key="1">
    <source>
        <dbReference type="HAMAP-Rule" id="MF_00758"/>
    </source>
</evidence>
<evidence type="ECO:0000305" key="2"/>
<name>Y2869_VIBVY</name>
<sequence>MNLTNHFLVAMPGMKDPYFQHSVIYICEHNEEGAMGLMINAPIDITVGKMLEQVDVQPVHPQLNTSSLTKPVYNGGPVAEDRGFILHRPKDFYESSLQMTEQISVTTSKDILTVLGTEAEPSSYIVALGYSGWSAGQLEAELAENSWLTVEANPDIIFDTPIAMRWQKAVQMLGIHASQLSDQAGHA</sequence>
<feature type="chain" id="PRO_0000214353" description="UPF0301 protein VV2869">
    <location>
        <begin position="1"/>
        <end position="187"/>
    </location>
</feature>
<comment type="similarity">
    <text evidence="1">Belongs to the UPF0301 (AlgH) family.</text>
</comment>
<comment type="sequence caution" evidence="2">
    <conflict type="erroneous initiation">
        <sequence resource="EMBL-CDS" id="BAC95633"/>
    </conflict>
</comment>